<geneLocation type="chloroplast"/>
<sequence length="91" mass="10899">MIKNSFISVIPQEDKKRKRGGSVEFQVFNFTNKIRILTSHLELHRKDYSSQRGLRKILGKRQRLLAYLSKKNRVRYKELIGQLDIREPKTR</sequence>
<gene>
    <name type="primary">rps15</name>
</gene>
<proteinExistence type="inferred from homology"/>
<keyword id="KW-0150">Chloroplast</keyword>
<keyword id="KW-0934">Plastid</keyword>
<keyword id="KW-0687">Ribonucleoprotein</keyword>
<keyword id="KW-0689">Ribosomal protein</keyword>
<protein>
    <recommendedName>
        <fullName evidence="2">Small ribosomal subunit protein uS15c</fullName>
    </recommendedName>
    <alternativeName>
        <fullName>30S ribosomal protein S15, chloroplastic</fullName>
    </alternativeName>
</protein>
<feature type="chain" id="PRO_0000354243" description="Small ribosomal subunit protein uS15c">
    <location>
        <begin position="1"/>
        <end position="91"/>
    </location>
</feature>
<comment type="subunit">
    <text evidence="1">Part of the 30S ribosomal subunit.</text>
</comment>
<comment type="subcellular location">
    <subcellularLocation>
        <location>Plastid</location>
        <location>Chloroplast</location>
    </subcellularLocation>
</comment>
<comment type="similarity">
    <text evidence="2">Belongs to the universal ribosomal protein uS15 family.</text>
</comment>
<reference key="1">
    <citation type="journal article" date="2007" name="Proc. Natl. Acad. Sci. U.S.A.">
        <title>Using plastid genome-scale data to resolve enigmatic relationships among basal angiosperms.</title>
        <authorList>
            <person name="Moore M.J."/>
            <person name="Bell C.D."/>
            <person name="Soltis P.S."/>
            <person name="Soltis D.E."/>
        </authorList>
    </citation>
    <scope>NUCLEOTIDE SEQUENCE [LARGE SCALE GENOMIC DNA]</scope>
</reference>
<accession>A8SEG3</accession>
<dbReference type="EMBL" id="EF614270">
    <property type="protein sequence ID" value="ABQ81508.1"/>
    <property type="molecule type" value="Genomic_DNA"/>
</dbReference>
<dbReference type="RefSeq" id="YP_001542504.1">
    <property type="nucleotide sequence ID" value="NC_009962.1"/>
</dbReference>
<dbReference type="SMR" id="A8SEG3"/>
<dbReference type="GeneID" id="5729494"/>
<dbReference type="GO" id="GO:0009507">
    <property type="term" value="C:chloroplast"/>
    <property type="evidence" value="ECO:0007669"/>
    <property type="project" value="UniProtKB-SubCell"/>
</dbReference>
<dbReference type="GO" id="GO:1990904">
    <property type="term" value="C:ribonucleoprotein complex"/>
    <property type="evidence" value="ECO:0007669"/>
    <property type="project" value="UniProtKB-KW"/>
</dbReference>
<dbReference type="GO" id="GO:0005840">
    <property type="term" value="C:ribosome"/>
    <property type="evidence" value="ECO:0007669"/>
    <property type="project" value="UniProtKB-KW"/>
</dbReference>
<dbReference type="GO" id="GO:0003735">
    <property type="term" value="F:structural constituent of ribosome"/>
    <property type="evidence" value="ECO:0007669"/>
    <property type="project" value="InterPro"/>
</dbReference>
<dbReference type="GO" id="GO:0006412">
    <property type="term" value="P:translation"/>
    <property type="evidence" value="ECO:0007669"/>
    <property type="project" value="UniProtKB-UniRule"/>
</dbReference>
<dbReference type="CDD" id="cd00353">
    <property type="entry name" value="Ribosomal_S15p_S13e"/>
    <property type="match status" value="1"/>
</dbReference>
<dbReference type="Gene3D" id="1.10.287.10">
    <property type="entry name" value="S15/NS1, RNA-binding"/>
    <property type="match status" value="1"/>
</dbReference>
<dbReference type="HAMAP" id="MF_01343_B">
    <property type="entry name" value="Ribosomal_uS15_B"/>
    <property type="match status" value="1"/>
</dbReference>
<dbReference type="InterPro" id="IPR000589">
    <property type="entry name" value="Ribosomal_uS15"/>
</dbReference>
<dbReference type="InterPro" id="IPR005290">
    <property type="entry name" value="Ribosomal_uS15_bac-type"/>
</dbReference>
<dbReference type="InterPro" id="IPR009068">
    <property type="entry name" value="uS15_NS1_RNA-bd_sf"/>
</dbReference>
<dbReference type="NCBIfam" id="TIGR00952">
    <property type="entry name" value="S15_bact"/>
    <property type="match status" value="1"/>
</dbReference>
<dbReference type="PANTHER" id="PTHR23321">
    <property type="entry name" value="RIBOSOMAL PROTEIN S15, BACTERIAL AND ORGANELLAR"/>
    <property type="match status" value="1"/>
</dbReference>
<dbReference type="PANTHER" id="PTHR23321:SF26">
    <property type="entry name" value="SMALL RIBOSOMAL SUBUNIT PROTEIN US15M"/>
    <property type="match status" value="1"/>
</dbReference>
<dbReference type="Pfam" id="PF00312">
    <property type="entry name" value="Ribosomal_S15"/>
    <property type="match status" value="1"/>
</dbReference>
<dbReference type="SMART" id="SM01387">
    <property type="entry name" value="Ribosomal_S15"/>
    <property type="match status" value="1"/>
</dbReference>
<dbReference type="SUPFAM" id="SSF47060">
    <property type="entry name" value="S15/NS1 RNA-binding domain"/>
    <property type="match status" value="1"/>
</dbReference>
<dbReference type="PROSITE" id="PS00362">
    <property type="entry name" value="RIBOSOMAL_S15"/>
    <property type="match status" value="1"/>
</dbReference>
<name>RR15_CERDE</name>
<evidence type="ECO:0000250" key="1"/>
<evidence type="ECO:0000305" key="2"/>
<organism>
    <name type="scientific">Ceratophyllum demersum</name>
    <name type="common">Rigid hornwort</name>
    <name type="synonym">Coontail</name>
    <dbReference type="NCBI Taxonomy" id="4428"/>
    <lineage>
        <taxon>Eukaryota</taxon>
        <taxon>Viridiplantae</taxon>
        <taxon>Streptophyta</taxon>
        <taxon>Embryophyta</taxon>
        <taxon>Tracheophyta</taxon>
        <taxon>Spermatophyta</taxon>
        <taxon>Magnoliopsida</taxon>
        <taxon>Ceratophyllales</taxon>
        <taxon>Ceratophyllaceae</taxon>
        <taxon>Ceratophyllum</taxon>
    </lineage>
</organism>